<protein>
    <recommendedName>
        <fullName evidence="1">Nicotinate phosphoribosyltransferase</fullName>
        <shortName evidence="1">NAPRTase</shortName>
        <ecNumber evidence="1">6.3.4.21</ecNumber>
    </recommendedName>
</protein>
<feature type="chain" id="PRO_0000205858" description="Nicotinate phosphoribosyltransferase">
    <location>
        <begin position="1"/>
        <end position="406"/>
    </location>
</feature>
<feature type="modified residue" description="Phosphohistidine; by autocatalysis" evidence="1">
    <location>
        <position position="227"/>
    </location>
</feature>
<dbReference type="EC" id="6.3.4.21" evidence="1"/>
<dbReference type="EMBL" id="AE008384">
    <property type="protein sequence ID" value="AAM32782.1"/>
    <property type="molecule type" value="Genomic_DNA"/>
</dbReference>
<dbReference type="RefSeq" id="WP_011034984.1">
    <property type="nucleotide sequence ID" value="NC_003901.1"/>
</dbReference>
<dbReference type="SMR" id="Q8PSJ3"/>
<dbReference type="GeneID" id="82162177"/>
<dbReference type="KEGG" id="mma:MM_3086"/>
<dbReference type="PATRIC" id="fig|192952.21.peg.3580"/>
<dbReference type="eggNOG" id="arCOG01481">
    <property type="taxonomic scope" value="Archaea"/>
</dbReference>
<dbReference type="HOGENOM" id="CLU_030991_1_0_2"/>
<dbReference type="UniPathway" id="UPA00253">
    <property type="reaction ID" value="UER00457"/>
</dbReference>
<dbReference type="Proteomes" id="UP000000595">
    <property type="component" value="Chromosome"/>
</dbReference>
<dbReference type="GO" id="GO:0005829">
    <property type="term" value="C:cytosol"/>
    <property type="evidence" value="ECO:0007669"/>
    <property type="project" value="TreeGrafter"/>
</dbReference>
<dbReference type="GO" id="GO:0004516">
    <property type="term" value="F:nicotinate phosphoribosyltransferase activity"/>
    <property type="evidence" value="ECO:0007669"/>
    <property type="project" value="UniProtKB-UniRule"/>
</dbReference>
<dbReference type="GO" id="GO:0034355">
    <property type="term" value="P:NAD biosynthetic process via the salvage pathway"/>
    <property type="evidence" value="ECO:0007669"/>
    <property type="project" value="TreeGrafter"/>
</dbReference>
<dbReference type="CDD" id="cd01401">
    <property type="entry name" value="PncB_like"/>
    <property type="match status" value="1"/>
</dbReference>
<dbReference type="Gene3D" id="3.20.140.10">
    <property type="entry name" value="nicotinate phosphoribosyltransferase"/>
    <property type="match status" value="1"/>
</dbReference>
<dbReference type="HAMAP" id="MF_00570">
    <property type="entry name" value="NAPRTase"/>
    <property type="match status" value="1"/>
</dbReference>
<dbReference type="InterPro" id="IPR041525">
    <property type="entry name" value="N/Namide_PRibTrfase"/>
</dbReference>
<dbReference type="InterPro" id="IPR040727">
    <property type="entry name" value="NAPRTase_N"/>
</dbReference>
<dbReference type="InterPro" id="IPR006406">
    <property type="entry name" value="Nic_PRibTrfase"/>
</dbReference>
<dbReference type="InterPro" id="IPR007229">
    <property type="entry name" value="Nic_PRibTrfase-Fam"/>
</dbReference>
<dbReference type="InterPro" id="IPR036068">
    <property type="entry name" value="Nicotinate_pribotase-like_C"/>
</dbReference>
<dbReference type="NCBIfam" id="TIGR01514">
    <property type="entry name" value="NAPRTase"/>
    <property type="match status" value="1"/>
</dbReference>
<dbReference type="NCBIfam" id="NF003704">
    <property type="entry name" value="PRK05321.1"/>
    <property type="match status" value="1"/>
</dbReference>
<dbReference type="PANTHER" id="PTHR11098">
    <property type="entry name" value="NICOTINATE PHOSPHORIBOSYLTRANSFERASE"/>
    <property type="match status" value="1"/>
</dbReference>
<dbReference type="PANTHER" id="PTHR11098:SF1">
    <property type="entry name" value="NICOTINATE PHOSPHORIBOSYLTRANSFERASE"/>
    <property type="match status" value="1"/>
</dbReference>
<dbReference type="Pfam" id="PF04095">
    <property type="entry name" value="NAPRTase"/>
    <property type="match status" value="1"/>
</dbReference>
<dbReference type="Pfam" id="PF17767">
    <property type="entry name" value="NAPRTase_N"/>
    <property type="match status" value="1"/>
</dbReference>
<dbReference type="PIRSF" id="PIRSF000484">
    <property type="entry name" value="NAPRT"/>
    <property type="match status" value="1"/>
</dbReference>
<dbReference type="SUPFAM" id="SSF51690">
    <property type="entry name" value="Nicotinate/Quinolinate PRTase C-terminal domain-like"/>
    <property type="match status" value="1"/>
</dbReference>
<dbReference type="SUPFAM" id="SSF54675">
    <property type="entry name" value="Nicotinate/Quinolinate PRTase N-terminal domain-like"/>
    <property type="match status" value="1"/>
</dbReference>
<name>PNCB_METMA</name>
<accession>Q8PSJ3</accession>
<sequence>MIKSILDNDLYKFTMQMAVLELFPKAEAEYRFTNRGLQRFSREFVEELRRVIDEEISGLRLTEEEYRWLGEKCPFLKPMYLEYLKNFRFKPEEVEICLTRENDLDMRIKGPWHSTILWEIVLMAAVSELYFTTIEKEWNGSTKNPGTPESATLESVLEAYGEKILEIGKVLEENGCLFSEFGTRRRRSFELHDQVMRSLVRIKTLTGTSNVYFAKKYGVKPIGTVGHEWIMGTSALVGLRYANRFAFENWVDVYNGDLGIALTDTFGSEAFFKDMDLKLSKIYDGFRHDSGDPYTFVDRVIEHYGKMGIDPMKKVIVFSDALNAEAAVKLKKYCEGKINCSFGIGTSLTNNSEFFRESPPLNMVIKLHSINGIPVVKLSDSPEKETGERDALRVANYIVGRKGLDE</sequence>
<proteinExistence type="inferred from homology"/>
<keyword id="KW-0436">Ligase</keyword>
<keyword id="KW-0597">Phosphoprotein</keyword>
<keyword id="KW-0662">Pyridine nucleotide biosynthesis</keyword>
<reference key="1">
    <citation type="journal article" date="2002" name="J. Mol. Microbiol. Biotechnol.">
        <title>The genome of Methanosarcina mazei: evidence for lateral gene transfer between Bacteria and Archaea.</title>
        <authorList>
            <person name="Deppenmeier U."/>
            <person name="Johann A."/>
            <person name="Hartsch T."/>
            <person name="Merkl R."/>
            <person name="Schmitz R.A."/>
            <person name="Martinez-Arias R."/>
            <person name="Henne A."/>
            <person name="Wiezer A."/>
            <person name="Baeumer S."/>
            <person name="Jacobi C."/>
            <person name="Brueggemann H."/>
            <person name="Lienard T."/>
            <person name="Christmann A."/>
            <person name="Boemecke M."/>
            <person name="Steckel S."/>
            <person name="Bhattacharyya A."/>
            <person name="Lykidis A."/>
            <person name="Overbeek R."/>
            <person name="Klenk H.-P."/>
            <person name="Gunsalus R.P."/>
            <person name="Fritz H.-J."/>
            <person name="Gottschalk G."/>
        </authorList>
    </citation>
    <scope>NUCLEOTIDE SEQUENCE [LARGE SCALE GENOMIC DNA]</scope>
    <source>
        <strain>ATCC BAA-159 / DSM 3647 / Goe1 / Go1 / JCM 11833 / OCM 88</strain>
    </source>
</reference>
<comment type="function">
    <text evidence="1">Catalyzes the synthesis of beta-nicotinate D-ribonucleotide from nicotinate and 5-phospho-D-ribose 1-phosphate at the expense of ATP.</text>
</comment>
<comment type="catalytic activity">
    <reaction evidence="1">
        <text>nicotinate + 5-phospho-alpha-D-ribose 1-diphosphate + ATP + H2O = nicotinate beta-D-ribonucleotide + ADP + phosphate + diphosphate</text>
        <dbReference type="Rhea" id="RHEA:36163"/>
        <dbReference type="ChEBI" id="CHEBI:15377"/>
        <dbReference type="ChEBI" id="CHEBI:30616"/>
        <dbReference type="ChEBI" id="CHEBI:32544"/>
        <dbReference type="ChEBI" id="CHEBI:33019"/>
        <dbReference type="ChEBI" id="CHEBI:43474"/>
        <dbReference type="ChEBI" id="CHEBI:57502"/>
        <dbReference type="ChEBI" id="CHEBI:58017"/>
        <dbReference type="ChEBI" id="CHEBI:456216"/>
        <dbReference type="EC" id="6.3.4.21"/>
    </reaction>
</comment>
<comment type="pathway">
    <text evidence="1">Cofactor biosynthesis; NAD(+) biosynthesis; nicotinate D-ribonucleotide from nicotinate: step 1/1.</text>
</comment>
<comment type="PTM">
    <text evidence="1">Transiently phosphorylated on a His residue during the reaction cycle. Phosphorylation strongly increases the affinity for substrates and increases the rate of nicotinate D-ribonucleotide production. Dephosphorylation regenerates the low-affinity form of the enzyme, leading to product release.</text>
</comment>
<comment type="similarity">
    <text evidence="1">Belongs to the NAPRTase family.</text>
</comment>
<evidence type="ECO:0000255" key="1">
    <source>
        <dbReference type="HAMAP-Rule" id="MF_00570"/>
    </source>
</evidence>
<organism>
    <name type="scientific">Methanosarcina mazei (strain ATCC BAA-159 / DSM 3647 / Goe1 / Go1 / JCM 11833 / OCM 88)</name>
    <name type="common">Methanosarcina frisia</name>
    <dbReference type="NCBI Taxonomy" id="192952"/>
    <lineage>
        <taxon>Archaea</taxon>
        <taxon>Methanobacteriati</taxon>
        <taxon>Methanobacteriota</taxon>
        <taxon>Stenosarchaea group</taxon>
        <taxon>Methanomicrobia</taxon>
        <taxon>Methanosarcinales</taxon>
        <taxon>Methanosarcinaceae</taxon>
        <taxon>Methanosarcina</taxon>
    </lineage>
</organism>
<gene>
    <name evidence="1" type="primary">pncB</name>
    <name type="ordered locus">MM_3086</name>
</gene>